<name>TRMD_PSEAB</name>
<evidence type="ECO:0000255" key="1">
    <source>
        <dbReference type="HAMAP-Rule" id="MF_00605"/>
    </source>
</evidence>
<evidence type="ECO:0007829" key="2">
    <source>
        <dbReference type="PDB" id="5WYQ"/>
    </source>
</evidence>
<evidence type="ECO:0007829" key="3">
    <source>
        <dbReference type="PDB" id="5WYR"/>
    </source>
</evidence>
<sequence length="252" mass="28343">MDKRLWVGVVSIFPEMFRAISDYGITSRAVKQGLLTLTCWNPRVYTEDRHQTVDDRPFGGGPGMVMKIKPLEGALADARQAAGGRKAKVIYLSPQGRQLTQAGVRELAEEEALILIAGRYEGIDERFIEEHVDEEWSIGDYVLSGGELPAMVLVDAVTRLLPGALGHADSAEEDSFTDGLLDCPHYTRPEVYADKRVPEVLLSGNHEHIRRWRLQQALGRTWERRADLLDSRSLSGEEQKLLAEYIRQRDDS</sequence>
<feature type="chain" id="PRO_1000072641" description="tRNA (guanine-N(1)-)-methyltransferase">
    <location>
        <begin position="1"/>
        <end position="252"/>
    </location>
</feature>
<feature type="binding site" evidence="1">
    <location>
        <position position="118"/>
    </location>
    <ligand>
        <name>S-adenosyl-L-methionine</name>
        <dbReference type="ChEBI" id="CHEBI:59789"/>
    </ligand>
</feature>
<feature type="binding site" evidence="1">
    <location>
        <begin position="138"/>
        <end position="143"/>
    </location>
    <ligand>
        <name>S-adenosyl-L-methionine</name>
        <dbReference type="ChEBI" id="CHEBI:59789"/>
    </ligand>
</feature>
<feature type="strand" evidence="2">
    <location>
        <begin position="5"/>
        <end position="10"/>
    </location>
</feature>
<feature type="helix" evidence="2">
    <location>
        <begin position="14"/>
        <end position="17"/>
    </location>
</feature>
<feature type="helix" evidence="2">
    <location>
        <begin position="18"/>
        <end position="21"/>
    </location>
</feature>
<feature type="helix" evidence="2">
    <location>
        <begin position="24"/>
        <end position="31"/>
    </location>
</feature>
<feature type="strand" evidence="2">
    <location>
        <begin position="34"/>
        <end position="40"/>
    </location>
</feature>
<feature type="turn" evidence="2">
    <location>
        <begin position="42"/>
        <end position="45"/>
    </location>
</feature>
<feature type="helix" evidence="2">
    <location>
        <begin position="68"/>
        <end position="81"/>
    </location>
</feature>
<feature type="turn" evidence="2">
    <location>
        <begin position="82"/>
        <end position="84"/>
    </location>
</feature>
<feature type="strand" evidence="2">
    <location>
        <begin position="87"/>
        <end position="92"/>
    </location>
</feature>
<feature type="strand" evidence="2">
    <location>
        <begin position="96"/>
        <end position="98"/>
    </location>
</feature>
<feature type="helix" evidence="2">
    <location>
        <begin position="101"/>
        <end position="107"/>
    </location>
</feature>
<feature type="strand" evidence="2">
    <location>
        <begin position="111"/>
        <end position="117"/>
    </location>
</feature>
<feature type="helix" evidence="2">
    <location>
        <begin position="125"/>
        <end position="131"/>
    </location>
</feature>
<feature type="strand" evidence="2">
    <location>
        <begin position="133"/>
        <end position="141"/>
    </location>
</feature>
<feature type="strand" evidence="3">
    <location>
        <begin position="144"/>
        <end position="146"/>
    </location>
</feature>
<feature type="helix" evidence="2">
    <location>
        <begin position="147"/>
        <end position="158"/>
    </location>
</feature>
<feature type="strand" evidence="2">
    <location>
        <begin position="178"/>
        <end position="180"/>
    </location>
</feature>
<feature type="strand" evidence="2">
    <location>
        <begin position="190"/>
        <end position="192"/>
    </location>
</feature>
<feature type="helix" evidence="2">
    <location>
        <begin position="199"/>
        <end position="202"/>
    </location>
</feature>
<feature type="helix" evidence="2">
    <location>
        <begin position="206"/>
        <end position="224"/>
    </location>
</feature>
<feature type="helix" evidence="2">
    <location>
        <begin position="226"/>
        <end position="230"/>
    </location>
</feature>
<feature type="helix" evidence="2">
    <location>
        <begin position="236"/>
        <end position="247"/>
    </location>
</feature>
<dbReference type="EC" id="2.1.1.228" evidence="1"/>
<dbReference type="EMBL" id="CP000438">
    <property type="protein sequence ID" value="ABJ12977.1"/>
    <property type="molecule type" value="Genomic_DNA"/>
</dbReference>
<dbReference type="RefSeq" id="WP_003137931.1">
    <property type="nucleotide sequence ID" value="NZ_CP034244.1"/>
</dbReference>
<dbReference type="PDB" id="5WYQ">
    <property type="method" value="X-ray"/>
    <property type="resolution" value="2.16 A"/>
    <property type="chains" value="A/B=5-250"/>
</dbReference>
<dbReference type="PDB" id="5WYR">
    <property type="method" value="X-ray"/>
    <property type="resolution" value="2.45 A"/>
    <property type="chains" value="A/B=5-250"/>
</dbReference>
<dbReference type="PDBsum" id="5WYQ"/>
<dbReference type="PDBsum" id="5WYR"/>
<dbReference type="SMR" id="Q02RL6"/>
<dbReference type="KEGG" id="pau:PA14_15990"/>
<dbReference type="PseudoCAP" id="PA14_15990"/>
<dbReference type="HOGENOM" id="CLU_047363_0_1_6"/>
<dbReference type="BioCyc" id="PAER208963:G1G74-1316-MONOMER"/>
<dbReference type="BRENDA" id="2.1.1.228">
    <property type="organism ID" value="5087"/>
</dbReference>
<dbReference type="Proteomes" id="UP000000653">
    <property type="component" value="Chromosome"/>
</dbReference>
<dbReference type="GO" id="GO:0005829">
    <property type="term" value="C:cytosol"/>
    <property type="evidence" value="ECO:0007669"/>
    <property type="project" value="TreeGrafter"/>
</dbReference>
<dbReference type="GO" id="GO:0052906">
    <property type="term" value="F:tRNA (guanine(37)-N1)-methyltransferase activity"/>
    <property type="evidence" value="ECO:0007669"/>
    <property type="project" value="UniProtKB-UniRule"/>
</dbReference>
<dbReference type="GO" id="GO:0002939">
    <property type="term" value="P:tRNA N1-guanine methylation"/>
    <property type="evidence" value="ECO:0007669"/>
    <property type="project" value="TreeGrafter"/>
</dbReference>
<dbReference type="CDD" id="cd18080">
    <property type="entry name" value="TrmD-like"/>
    <property type="match status" value="1"/>
</dbReference>
<dbReference type="FunFam" id="1.10.1270.20:FF:000001">
    <property type="entry name" value="tRNA (guanine-N(1)-)-methyltransferase"/>
    <property type="match status" value="1"/>
</dbReference>
<dbReference type="FunFam" id="3.40.1280.10:FF:000001">
    <property type="entry name" value="tRNA (guanine-N(1)-)-methyltransferase"/>
    <property type="match status" value="1"/>
</dbReference>
<dbReference type="Gene3D" id="3.40.1280.10">
    <property type="match status" value="1"/>
</dbReference>
<dbReference type="Gene3D" id="1.10.1270.20">
    <property type="entry name" value="tRNA(m1g37)methyltransferase, domain 2"/>
    <property type="match status" value="1"/>
</dbReference>
<dbReference type="HAMAP" id="MF_00605">
    <property type="entry name" value="TrmD"/>
    <property type="match status" value="1"/>
</dbReference>
<dbReference type="InterPro" id="IPR029028">
    <property type="entry name" value="Alpha/beta_knot_MTases"/>
</dbReference>
<dbReference type="InterPro" id="IPR023148">
    <property type="entry name" value="tRNA_m1G_MeTrfase_C_sf"/>
</dbReference>
<dbReference type="InterPro" id="IPR002649">
    <property type="entry name" value="tRNA_m1G_MeTrfase_TrmD"/>
</dbReference>
<dbReference type="InterPro" id="IPR029026">
    <property type="entry name" value="tRNA_m1G_MTases_N"/>
</dbReference>
<dbReference type="InterPro" id="IPR016009">
    <property type="entry name" value="tRNA_MeTrfase_TRMD/TRM10"/>
</dbReference>
<dbReference type="NCBIfam" id="NF000648">
    <property type="entry name" value="PRK00026.1"/>
    <property type="match status" value="1"/>
</dbReference>
<dbReference type="NCBIfam" id="TIGR00088">
    <property type="entry name" value="trmD"/>
    <property type="match status" value="1"/>
</dbReference>
<dbReference type="PANTHER" id="PTHR46417">
    <property type="entry name" value="TRNA (GUANINE-N(1)-)-METHYLTRANSFERASE"/>
    <property type="match status" value="1"/>
</dbReference>
<dbReference type="PANTHER" id="PTHR46417:SF1">
    <property type="entry name" value="TRNA (GUANINE-N(1)-)-METHYLTRANSFERASE"/>
    <property type="match status" value="1"/>
</dbReference>
<dbReference type="Pfam" id="PF01746">
    <property type="entry name" value="tRNA_m1G_MT"/>
    <property type="match status" value="1"/>
</dbReference>
<dbReference type="PIRSF" id="PIRSF000386">
    <property type="entry name" value="tRNA_mtase"/>
    <property type="match status" value="1"/>
</dbReference>
<dbReference type="SUPFAM" id="SSF75217">
    <property type="entry name" value="alpha/beta knot"/>
    <property type="match status" value="1"/>
</dbReference>
<accession>Q02RL6</accession>
<gene>
    <name evidence="1" type="primary">trmD</name>
    <name type="ordered locus">PA14_15990</name>
</gene>
<reference key="1">
    <citation type="journal article" date="2006" name="Genome Biol.">
        <title>Genomic analysis reveals that Pseudomonas aeruginosa virulence is combinatorial.</title>
        <authorList>
            <person name="Lee D.G."/>
            <person name="Urbach J.M."/>
            <person name="Wu G."/>
            <person name="Liberati N.T."/>
            <person name="Feinbaum R.L."/>
            <person name="Miyata S."/>
            <person name="Diggins L.T."/>
            <person name="He J."/>
            <person name="Saucier M."/>
            <person name="Deziel E."/>
            <person name="Friedman L."/>
            <person name="Li L."/>
            <person name="Grills G."/>
            <person name="Montgomery K."/>
            <person name="Kucherlapati R."/>
            <person name="Rahme L.G."/>
            <person name="Ausubel F.M."/>
        </authorList>
    </citation>
    <scope>NUCLEOTIDE SEQUENCE [LARGE SCALE GENOMIC DNA]</scope>
    <source>
        <strain>UCBPP-PA14</strain>
    </source>
</reference>
<organism>
    <name type="scientific">Pseudomonas aeruginosa (strain UCBPP-PA14)</name>
    <dbReference type="NCBI Taxonomy" id="208963"/>
    <lineage>
        <taxon>Bacteria</taxon>
        <taxon>Pseudomonadati</taxon>
        <taxon>Pseudomonadota</taxon>
        <taxon>Gammaproteobacteria</taxon>
        <taxon>Pseudomonadales</taxon>
        <taxon>Pseudomonadaceae</taxon>
        <taxon>Pseudomonas</taxon>
    </lineage>
</organism>
<keyword id="KW-0002">3D-structure</keyword>
<keyword id="KW-0963">Cytoplasm</keyword>
<keyword id="KW-0489">Methyltransferase</keyword>
<keyword id="KW-0949">S-adenosyl-L-methionine</keyword>
<keyword id="KW-0808">Transferase</keyword>
<keyword id="KW-0819">tRNA processing</keyword>
<comment type="function">
    <text evidence="1">Specifically methylates guanosine-37 in various tRNAs.</text>
</comment>
<comment type="catalytic activity">
    <reaction evidence="1">
        <text>guanosine(37) in tRNA + S-adenosyl-L-methionine = N(1)-methylguanosine(37) in tRNA + S-adenosyl-L-homocysteine + H(+)</text>
        <dbReference type="Rhea" id="RHEA:36899"/>
        <dbReference type="Rhea" id="RHEA-COMP:10145"/>
        <dbReference type="Rhea" id="RHEA-COMP:10147"/>
        <dbReference type="ChEBI" id="CHEBI:15378"/>
        <dbReference type="ChEBI" id="CHEBI:57856"/>
        <dbReference type="ChEBI" id="CHEBI:59789"/>
        <dbReference type="ChEBI" id="CHEBI:73542"/>
        <dbReference type="ChEBI" id="CHEBI:74269"/>
        <dbReference type="EC" id="2.1.1.228"/>
    </reaction>
</comment>
<comment type="subunit">
    <text evidence="1">Homodimer.</text>
</comment>
<comment type="subcellular location">
    <subcellularLocation>
        <location evidence="1">Cytoplasm</location>
    </subcellularLocation>
</comment>
<comment type="similarity">
    <text evidence="1">Belongs to the RNA methyltransferase TrmD family.</text>
</comment>
<proteinExistence type="evidence at protein level"/>
<protein>
    <recommendedName>
        <fullName evidence="1">tRNA (guanine-N(1)-)-methyltransferase</fullName>
        <ecNumber evidence="1">2.1.1.228</ecNumber>
    </recommendedName>
    <alternativeName>
        <fullName evidence="1">M1G-methyltransferase</fullName>
    </alternativeName>
    <alternativeName>
        <fullName evidence="1">tRNA [GM37] methyltransferase</fullName>
    </alternativeName>
</protein>